<feature type="chain" id="PRO_0000106924" description="Uncharacterized protein MJ0546">
    <location>
        <begin position="1"/>
        <end position="56"/>
    </location>
</feature>
<feature type="transmembrane region" description="Helical" evidence="1">
    <location>
        <begin position="2"/>
        <end position="22"/>
    </location>
</feature>
<keyword id="KW-0472">Membrane</keyword>
<keyword id="KW-1185">Reference proteome</keyword>
<keyword id="KW-0812">Transmembrane</keyword>
<keyword id="KW-1133">Transmembrane helix</keyword>
<organism>
    <name type="scientific">Methanocaldococcus jannaschii (strain ATCC 43067 / DSM 2661 / JAL-1 / JCM 10045 / NBRC 100440)</name>
    <name type="common">Methanococcus jannaschii</name>
    <dbReference type="NCBI Taxonomy" id="243232"/>
    <lineage>
        <taxon>Archaea</taxon>
        <taxon>Methanobacteriati</taxon>
        <taxon>Methanobacteriota</taxon>
        <taxon>Methanomada group</taxon>
        <taxon>Methanococci</taxon>
        <taxon>Methanococcales</taxon>
        <taxon>Methanocaldococcaceae</taxon>
        <taxon>Methanocaldococcus</taxon>
    </lineage>
</organism>
<sequence length="56" mass="6460">MILYIIVAISILLNIILGIKVIMLQKELEEVKKATRLTKEEVEKLNERIRKLKLGG</sequence>
<reference key="1">
    <citation type="journal article" date="1996" name="Science">
        <title>Complete genome sequence of the methanogenic archaeon, Methanococcus jannaschii.</title>
        <authorList>
            <person name="Bult C.J."/>
            <person name="White O."/>
            <person name="Olsen G.J."/>
            <person name="Zhou L."/>
            <person name="Fleischmann R.D."/>
            <person name="Sutton G.G."/>
            <person name="Blake J.A."/>
            <person name="FitzGerald L.M."/>
            <person name="Clayton R.A."/>
            <person name="Gocayne J.D."/>
            <person name="Kerlavage A.R."/>
            <person name="Dougherty B.A."/>
            <person name="Tomb J.-F."/>
            <person name="Adams M.D."/>
            <person name="Reich C.I."/>
            <person name="Overbeek R."/>
            <person name="Kirkness E.F."/>
            <person name="Weinstock K.G."/>
            <person name="Merrick J.M."/>
            <person name="Glodek A."/>
            <person name="Scott J.L."/>
            <person name="Geoghagen N.S.M."/>
            <person name="Weidman J.F."/>
            <person name="Fuhrmann J.L."/>
            <person name="Nguyen D."/>
            <person name="Utterback T.R."/>
            <person name="Kelley J.M."/>
            <person name="Peterson J.D."/>
            <person name="Sadow P.W."/>
            <person name="Hanna M.C."/>
            <person name="Cotton M.D."/>
            <person name="Roberts K.M."/>
            <person name="Hurst M.A."/>
            <person name="Kaine B.P."/>
            <person name="Borodovsky M."/>
            <person name="Klenk H.-P."/>
            <person name="Fraser C.M."/>
            <person name="Smith H.O."/>
            <person name="Woese C.R."/>
            <person name="Venter J.C."/>
        </authorList>
    </citation>
    <scope>NUCLEOTIDE SEQUENCE [LARGE SCALE GENOMIC DNA]</scope>
    <source>
        <strain>ATCC 43067 / DSM 2661 / JAL-1 / JCM 10045 / NBRC 100440</strain>
    </source>
</reference>
<dbReference type="EMBL" id="L77117">
    <property type="protein sequence ID" value="AAB98548.1"/>
    <property type="molecule type" value="Genomic_DNA"/>
</dbReference>
<dbReference type="PIR" id="B64368">
    <property type="entry name" value="B64368"/>
</dbReference>
<dbReference type="RefSeq" id="WP_010870050.1">
    <property type="nucleotide sequence ID" value="NC_000909.1"/>
</dbReference>
<dbReference type="SMR" id="Q57966"/>
<dbReference type="STRING" id="243232.MJ_0546"/>
<dbReference type="PaxDb" id="243232-MJ_0546"/>
<dbReference type="EnsemblBacteria" id="AAB98548">
    <property type="protein sequence ID" value="AAB98548"/>
    <property type="gene ID" value="MJ_0546"/>
</dbReference>
<dbReference type="GeneID" id="43965129"/>
<dbReference type="KEGG" id="mja:MJ_0546"/>
<dbReference type="eggNOG" id="arCOG05040">
    <property type="taxonomic scope" value="Archaea"/>
</dbReference>
<dbReference type="HOGENOM" id="CLU_208223_0_0_2"/>
<dbReference type="InParanoid" id="Q57966"/>
<dbReference type="OrthoDB" id="66038at2157"/>
<dbReference type="Proteomes" id="UP000000805">
    <property type="component" value="Chromosome"/>
</dbReference>
<dbReference type="GO" id="GO:0016020">
    <property type="term" value="C:membrane"/>
    <property type="evidence" value="ECO:0007669"/>
    <property type="project" value="UniProtKB-SubCell"/>
</dbReference>
<name>Y546_METJA</name>
<proteinExistence type="predicted"/>
<comment type="subcellular location">
    <subcellularLocation>
        <location evidence="2">Membrane</location>
        <topology evidence="2">Single-pass membrane protein</topology>
    </subcellularLocation>
</comment>
<evidence type="ECO:0000255" key="1"/>
<evidence type="ECO:0000305" key="2"/>
<protein>
    <recommendedName>
        <fullName>Uncharacterized protein MJ0546</fullName>
    </recommendedName>
</protein>
<accession>Q57966</accession>
<gene>
    <name type="ordered locus">MJ0546</name>
</gene>